<name>KDSB_KLEP7</name>
<keyword id="KW-0963">Cytoplasm</keyword>
<keyword id="KW-0448">Lipopolysaccharide biosynthesis</keyword>
<keyword id="KW-0548">Nucleotidyltransferase</keyword>
<keyword id="KW-0808">Transferase</keyword>
<feature type="chain" id="PRO_1000003367" description="3-deoxy-manno-octulosonate cytidylyltransferase">
    <location>
        <begin position="1"/>
        <end position="248"/>
    </location>
</feature>
<dbReference type="EC" id="2.7.7.38" evidence="1"/>
<dbReference type="EMBL" id="CP000647">
    <property type="protein sequence ID" value="ABR76381.1"/>
    <property type="molecule type" value="Genomic_DNA"/>
</dbReference>
<dbReference type="RefSeq" id="WP_002898180.1">
    <property type="nucleotide sequence ID" value="NC_009648.1"/>
</dbReference>
<dbReference type="SMR" id="A6T710"/>
<dbReference type="STRING" id="272620.KPN_00945"/>
<dbReference type="PaxDb" id="272620-KPN_00945"/>
<dbReference type="EnsemblBacteria" id="ABR76381">
    <property type="protein sequence ID" value="ABR76381"/>
    <property type="gene ID" value="KPN_00945"/>
</dbReference>
<dbReference type="KEGG" id="kpn:KPN_00945"/>
<dbReference type="HOGENOM" id="CLU_065038_1_0_6"/>
<dbReference type="UniPathway" id="UPA00030"/>
<dbReference type="UniPathway" id="UPA00358">
    <property type="reaction ID" value="UER00476"/>
</dbReference>
<dbReference type="Proteomes" id="UP000000265">
    <property type="component" value="Chromosome"/>
</dbReference>
<dbReference type="GO" id="GO:0005829">
    <property type="term" value="C:cytosol"/>
    <property type="evidence" value="ECO:0007669"/>
    <property type="project" value="TreeGrafter"/>
</dbReference>
<dbReference type="GO" id="GO:0008690">
    <property type="term" value="F:3-deoxy-manno-octulosonate cytidylyltransferase activity"/>
    <property type="evidence" value="ECO:0007669"/>
    <property type="project" value="UniProtKB-UniRule"/>
</dbReference>
<dbReference type="GO" id="GO:0033468">
    <property type="term" value="P:CMP-keto-3-deoxy-D-manno-octulosonic acid biosynthetic process"/>
    <property type="evidence" value="ECO:0007669"/>
    <property type="project" value="UniProtKB-UniRule"/>
</dbReference>
<dbReference type="GO" id="GO:0009103">
    <property type="term" value="P:lipopolysaccharide biosynthetic process"/>
    <property type="evidence" value="ECO:0007669"/>
    <property type="project" value="UniProtKB-UniRule"/>
</dbReference>
<dbReference type="CDD" id="cd02517">
    <property type="entry name" value="CMP-KDO-Synthetase"/>
    <property type="match status" value="1"/>
</dbReference>
<dbReference type="FunFam" id="3.90.550.10:FF:000011">
    <property type="entry name" value="3-deoxy-manno-octulosonate cytidylyltransferase"/>
    <property type="match status" value="1"/>
</dbReference>
<dbReference type="Gene3D" id="3.90.550.10">
    <property type="entry name" value="Spore Coat Polysaccharide Biosynthesis Protein SpsA, Chain A"/>
    <property type="match status" value="1"/>
</dbReference>
<dbReference type="HAMAP" id="MF_00057">
    <property type="entry name" value="KdsB"/>
    <property type="match status" value="1"/>
</dbReference>
<dbReference type="InterPro" id="IPR003329">
    <property type="entry name" value="Cytidylyl_trans"/>
</dbReference>
<dbReference type="InterPro" id="IPR004528">
    <property type="entry name" value="KdsB"/>
</dbReference>
<dbReference type="InterPro" id="IPR029044">
    <property type="entry name" value="Nucleotide-diphossugar_trans"/>
</dbReference>
<dbReference type="NCBIfam" id="TIGR00466">
    <property type="entry name" value="kdsB"/>
    <property type="match status" value="1"/>
</dbReference>
<dbReference type="NCBIfam" id="NF003950">
    <property type="entry name" value="PRK05450.1-3"/>
    <property type="match status" value="1"/>
</dbReference>
<dbReference type="NCBIfam" id="NF003952">
    <property type="entry name" value="PRK05450.1-5"/>
    <property type="match status" value="1"/>
</dbReference>
<dbReference type="NCBIfam" id="NF009905">
    <property type="entry name" value="PRK13368.1"/>
    <property type="match status" value="1"/>
</dbReference>
<dbReference type="PANTHER" id="PTHR42866">
    <property type="entry name" value="3-DEOXY-MANNO-OCTULOSONATE CYTIDYLYLTRANSFERASE"/>
    <property type="match status" value="1"/>
</dbReference>
<dbReference type="PANTHER" id="PTHR42866:SF2">
    <property type="entry name" value="3-DEOXY-MANNO-OCTULOSONATE CYTIDYLYLTRANSFERASE, MITOCHONDRIAL"/>
    <property type="match status" value="1"/>
</dbReference>
<dbReference type="Pfam" id="PF02348">
    <property type="entry name" value="CTP_transf_3"/>
    <property type="match status" value="1"/>
</dbReference>
<dbReference type="SUPFAM" id="SSF53448">
    <property type="entry name" value="Nucleotide-diphospho-sugar transferases"/>
    <property type="match status" value="1"/>
</dbReference>
<accession>A6T710</accession>
<protein>
    <recommendedName>
        <fullName evidence="1">3-deoxy-manno-octulosonate cytidylyltransferase</fullName>
        <ecNumber evidence="1">2.7.7.38</ecNumber>
    </recommendedName>
    <alternativeName>
        <fullName evidence="1">CMP-2-keto-3-deoxyoctulosonic acid synthase</fullName>
        <shortName evidence="1">CKS</shortName>
        <shortName evidence="1">CMP-KDO synthase</shortName>
    </alternativeName>
</protein>
<gene>
    <name evidence="1" type="primary">kdsB</name>
    <name type="ordered locus">KPN78578_09200</name>
    <name type="ORF">KPN_00945</name>
</gene>
<reference key="1">
    <citation type="submission" date="2006-09" db="EMBL/GenBank/DDBJ databases">
        <authorList>
            <consortium name="The Klebsiella pneumonia Genome Sequencing Project"/>
            <person name="McClelland M."/>
            <person name="Sanderson E.K."/>
            <person name="Spieth J."/>
            <person name="Clifton W.S."/>
            <person name="Latreille P."/>
            <person name="Sabo A."/>
            <person name="Pepin K."/>
            <person name="Bhonagiri V."/>
            <person name="Porwollik S."/>
            <person name="Ali J."/>
            <person name="Wilson R.K."/>
        </authorList>
    </citation>
    <scope>NUCLEOTIDE SEQUENCE [LARGE SCALE GENOMIC DNA]</scope>
    <source>
        <strain>ATCC 700721 / MGH 78578</strain>
    </source>
</reference>
<evidence type="ECO:0000255" key="1">
    <source>
        <dbReference type="HAMAP-Rule" id="MF_00057"/>
    </source>
</evidence>
<organism>
    <name type="scientific">Klebsiella pneumoniae subsp. pneumoniae (strain ATCC 700721 / MGH 78578)</name>
    <dbReference type="NCBI Taxonomy" id="272620"/>
    <lineage>
        <taxon>Bacteria</taxon>
        <taxon>Pseudomonadati</taxon>
        <taxon>Pseudomonadota</taxon>
        <taxon>Gammaproteobacteria</taxon>
        <taxon>Enterobacterales</taxon>
        <taxon>Enterobacteriaceae</taxon>
        <taxon>Klebsiella/Raoultella group</taxon>
        <taxon>Klebsiella</taxon>
        <taxon>Klebsiella pneumoniae complex</taxon>
    </lineage>
</organism>
<sequence>MSFVVIIPARFASTRLPGKPLQDINGKPMIVHVLERARESGADRIIVATDHEDVARAVEAAGGEVCMTRADHQSGTERLAEVVEKCAFSDDTIIVNIQGDEPMIPPAIVRQVAENLAASSSGMATLAVPIHDAEEAFNPNAVKVVMDAKGYALYFSRATIPWDRDRFAQSRETIGDSLLRHIGIYGYRAGFIRRYVSWAPSPLEQIEMLEQLRVLWYGEKIHVAVAAEVPGTGVDTPEDLERVRAELR</sequence>
<comment type="function">
    <text evidence="1">Activates KDO (a required 8-carbon sugar) for incorporation into bacterial lipopolysaccharide in Gram-negative bacteria.</text>
</comment>
<comment type="catalytic activity">
    <reaction evidence="1">
        <text>3-deoxy-alpha-D-manno-oct-2-ulosonate + CTP = CMP-3-deoxy-beta-D-manno-octulosonate + diphosphate</text>
        <dbReference type="Rhea" id="RHEA:23448"/>
        <dbReference type="ChEBI" id="CHEBI:33019"/>
        <dbReference type="ChEBI" id="CHEBI:37563"/>
        <dbReference type="ChEBI" id="CHEBI:85986"/>
        <dbReference type="ChEBI" id="CHEBI:85987"/>
        <dbReference type="EC" id="2.7.7.38"/>
    </reaction>
</comment>
<comment type="pathway">
    <text evidence="1">Nucleotide-sugar biosynthesis; CMP-3-deoxy-D-manno-octulosonate biosynthesis; CMP-3-deoxy-D-manno-octulosonate from 3-deoxy-D-manno-octulosonate and CTP: step 1/1.</text>
</comment>
<comment type="pathway">
    <text evidence="1">Bacterial outer membrane biogenesis; lipopolysaccharide biosynthesis.</text>
</comment>
<comment type="subcellular location">
    <subcellularLocation>
        <location evidence="1">Cytoplasm</location>
    </subcellularLocation>
</comment>
<comment type="similarity">
    <text evidence="1">Belongs to the KdsB family.</text>
</comment>
<proteinExistence type="inferred from homology"/>